<accession>A9BPS2</accession>
<name>RS19_DELAS</name>
<protein>
    <recommendedName>
        <fullName evidence="1">Small ribosomal subunit protein uS19</fullName>
    </recommendedName>
    <alternativeName>
        <fullName evidence="2">30S ribosomal protein S19</fullName>
    </alternativeName>
</protein>
<reference key="1">
    <citation type="submission" date="2007-11" db="EMBL/GenBank/DDBJ databases">
        <title>Complete sequence of Delftia acidovorans DSM 14801 / SPH-1.</title>
        <authorList>
            <person name="Copeland A."/>
            <person name="Lucas S."/>
            <person name="Lapidus A."/>
            <person name="Barry K."/>
            <person name="Glavina del Rio T."/>
            <person name="Dalin E."/>
            <person name="Tice H."/>
            <person name="Pitluck S."/>
            <person name="Lowry S."/>
            <person name="Clum A."/>
            <person name="Schmutz J."/>
            <person name="Larimer F."/>
            <person name="Land M."/>
            <person name="Hauser L."/>
            <person name="Kyrpides N."/>
            <person name="Kim E."/>
            <person name="Schleheck D."/>
            <person name="Richardson P."/>
        </authorList>
    </citation>
    <scope>NUCLEOTIDE SEQUENCE [LARGE SCALE GENOMIC DNA]</scope>
    <source>
        <strain>DSM 14801 / SPH-1</strain>
    </source>
</reference>
<comment type="function">
    <text evidence="1">Protein S19 forms a complex with S13 that binds strongly to the 16S ribosomal RNA.</text>
</comment>
<comment type="similarity">
    <text evidence="1">Belongs to the universal ribosomal protein uS19 family.</text>
</comment>
<proteinExistence type="inferred from homology"/>
<feature type="chain" id="PRO_1000127961" description="Small ribosomal subunit protein uS19">
    <location>
        <begin position="1"/>
        <end position="91"/>
    </location>
</feature>
<keyword id="KW-1185">Reference proteome</keyword>
<keyword id="KW-0687">Ribonucleoprotein</keyword>
<keyword id="KW-0689">Ribosomal protein</keyword>
<keyword id="KW-0694">RNA-binding</keyword>
<keyword id="KW-0699">rRNA-binding</keyword>
<sequence>MTRSLKKGPFVDHHLLAKAEKAVATKDKKPVKTWSRRSMVLPEFIGLTIAVHNGKQHVPVYVTDQMVGHKLGEFALTRTFKGHPADKKAKK</sequence>
<organism>
    <name type="scientific">Delftia acidovorans (strain DSM 14801 / SPH-1)</name>
    <dbReference type="NCBI Taxonomy" id="398578"/>
    <lineage>
        <taxon>Bacteria</taxon>
        <taxon>Pseudomonadati</taxon>
        <taxon>Pseudomonadota</taxon>
        <taxon>Betaproteobacteria</taxon>
        <taxon>Burkholderiales</taxon>
        <taxon>Comamonadaceae</taxon>
        <taxon>Delftia</taxon>
    </lineage>
</organism>
<dbReference type="EMBL" id="CP000884">
    <property type="protein sequence ID" value="ABX33041.1"/>
    <property type="molecule type" value="Genomic_DNA"/>
</dbReference>
<dbReference type="RefSeq" id="WP_012202333.1">
    <property type="nucleotide sequence ID" value="NC_010002.1"/>
</dbReference>
<dbReference type="SMR" id="A9BPS2"/>
<dbReference type="STRING" id="398578.Daci_0395"/>
<dbReference type="GeneID" id="94689737"/>
<dbReference type="KEGG" id="dac:Daci_0395"/>
<dbReference type="eggNOG" id="COG0185">
    <property type="taxonomic scope" value="Bacteria"/>
</dbReference>
<dbReference type="HOGENOM" id="CLU_144911_0_1_4"/>
<dbReference type="Proteomes" id="UP000000784">
    <property type="component" value="Chromosome"/>
</dbReference>
<dbReference type="GO" id="GO:0005737">
    <property type="term" value="C:cytoplasm"/>
    <property type="evidence" value="ECO:0007669"/>
    <property type="project" value="UniProtKB-ARBA"/>
</dbReference>
<dbReference type="GO" id="GO:0015935">
    <property type="term" value="C:small ribosomal subunit"/>
    <property type="evidence" value="ECO:0007669"/>
    <property type="project" value="InterPro"/>
</dbReference>
<dbReference type="GO" id="GO:0019843">
    <property type="term" value="F:rRNA binding"/>
    <property type="evidence" value="ECO:0007669"/>
    <property type="project" value="UniProtKB-UniRule"/>
</dbReference>
<dbReference type="GO" id="GO:0003735">
    <property type="term" value="F:structural constituent of ribosome"/>
    <property type="evidence" value="ECO:0007669"/>
    <property type="project" value="InterPro"/>
</dbReference>
<dbReference type="GO" id="GO:0000028">
    <property type="term" value="P:ribosomal small subunit assembly"/>
    <property type="evidence" value="ECO:0007669"/>
    <property type="project" value="TreeGrafter"/>
</dbReference>
<dbReference type="GO" id="GO:0006412">
    <property type="term" value="P:translation"/>
    <property type="evidence" value="ECO:0007669"/>
    <property type="project" value="UniProtKB-UniRule"/>
</dbReference>
<dbReference type="FunFam" id="3.30.860.10:FF:000001">
    <property type="entry name" value="30S ribosomal protein S19"/>
    <property type="match status" value="1"/>
</dbReference>
<dbReference type="Gene3D" id="3.30.860.10">
    <property type="entry name" value="30s Ribosomal Protein S19, Chain A"/>
    <property type="match status" value="1"/>
</dbReference>
<dbReference type="HAMAP" id="MF_00531">
    <property type="entry name" value="Ribosomal_uS19"/>
    <property type="match status" value="1"/>
</dbReference>
<dbReference type="InterPro" id="IPR002222">
    <property type="entry name" value="Ribosomal_uS19"/>
</dbReference>
<dbReference type="InterPro" id="IPR005732">
    <property type="entry name" value="Ribosomal_uS19_bac-type"/>
</dbReference>
<dbReference type="InterPro" id="IPR020934">
    <property type="entry name" value="Ribosomal_uS19_CS"/>
</dbReference>
<dbReference type="InterPro" id="IPR023575">
    <property type="entry name" value="Ribosomal_uS19_SF"/>
</dbReference>
<dbReference type="NCBIfam" id="TIGR01050">
    <property type="entry name" value="rpsS_bact"/>
    <property type="match status" value="1"/>
</dbReference>
<dbReference type="PANTHER" id="PTHR11880">
    <property type="entry name" value="RIBOSOMAL PROTEIN S19P FAMILY MEMBER"/>
    <property type="match status" value="1"/>
</dbReference>
<dbReference type="PANTHER" id="PTHR11880:SF8">
    <property type="entry name" value="SMALL RIBOSOMAL SUBUNIT PROTEIN US19M"/>
    <property type="match status" value="1"/>
</dbReference>
<dbReference type="Pfam" id="PF00203">
    <property type="entry name" value="Ribosomal_S19"/>
    <property type="match status" value="1"/>
</dbReference>
<dbReference type="PIRSF" id="PIRSF002144">
    <property type="entry name" value="Ribosomal_S19"/>
    <property type="match status" value="1"/>
</dbReference>
<dbReference type="PRINTS" id="PR00975">
    <property type="entry name" value="RIBOSOMALS19"/>
</dbReference>
<dbReference type="SUPFAM" id="SSF54570">
    <property type="entry name" value="Ribosomal protein S19"/>
    <property type="match status" value="1"/>
</dbReference>
<dbReference type="PROSITE" id="PS00323">
    <property type="entry name" value="RIBOSOMAL_S19"/>
    <property type="match status" value="1"/>
</dbReference>
<evidence type="ECO:0000255" key="1">
    <source>
        <dbReference type="HAMAP-Rule" id="MF_00531"/>
    </source>
</evidence>
<evidence type="ECO:0000305" key="2"/>
<gene>
    <name evidence="1" type="primary">rpsS</name>
    <name type="ordered locus">Daci_0395</name>
</gene>